<reference key="1">
    <citation type="journal article" date="2002" name="Nature">
        <title>Comparison of the genomes of two Xanthomonas pathogens with differing host specificities.</title>
        <authorList>
            <person name="da Silva A.C.R."/>
            <person name="Ferro J.A."/>
            <person name="Reinach F.C."/>
            <person name="Farah C.S."/>
            <person name="Furlan L.R."/>
            <person name="Quaggio R.B."/>
            <person name="Monteiro-Vitorello C.B."/>
            <person name="Van Sluys M.A."/>
            <person name="Almeida N.F. Jr."/>
            <person name="Alves L.M.C."/>
            <person name="do Amaral A.M."/>
            <person name="Bertolini M.C."/>
            <person name="Camargo L.E.A."/>
            <person name="Camarotte G."/>
            <person name="Cannavan F."/>
            <person name="Cardozo J."/>
            <person name="Chambergo F."/>
            <person name="Ciapina L.P."/>
            <person name="Cicarelli R.M.B."/>
            <person name="Coutinho L.L."/>
            <person name="Cursino-Santos J.R."/>
            <person name="El-Dorry H."/>
            <person name="Faria J.B."/>
            <person name="Ferreira A.J.S."/>
            <person name="Ferreira R.C.C."/>
            <person name="Ferro M.I.T."/>
            <person name="Formighieri E.F."/>
            <person name="Franco M.C."/>
            <person name="Greggio C.C."/>
            <person name="Gruber A."/>
            <person name="Katsuyama A.M."/>
            <person name="Kishi L.T."/>
            <person name="Leite R.P."/>
            <person name="Lemos E.G.M."/>
            <person name="Lemos M.V.F."/>
            <person name="Locali E.C."/>
            <person name="Machado M.A."/>
            <person name="Madeira A.M.B.N."/>
            <person name="Martinez-Rossi N.M."/>
            <person name="Martins E.C."/>
            <person name="Meidanis J."/>
            <person name="Menck C.F.M."/>
            <person name="Miyaki C.Y."/>
            <person name="Moon D.H."/>
            <person name="Moreira L.M."/>
            <person name="Novo M.T.M."/>
            <person name="Okura V.K."/>
            <person name="Oliveira M.C."/>
            <person name="Oliveira V.R."/>
            <person name="Pereira H.A."/>
            <person name="Rossi A."/>
            <person name="Sena J.A.D."/>
            <person name="Silva C."/>
            <person name="de Souza R.F."/>
            <person name="Spinola L.A.F."/>
            <person name="Takita M.A."/>
            <person name="Tamura R.E."/>
            <person name="Teixeira E.C."/>
            <person name="Tezza R.I.D."/>
            <person name="Trindade dos Santos M."/>
            <person name="Truffi D."/>
            <person name="Tsai S.M."/>
            <person name="White F.F."/>
            <person name="Setubal J.C."/>
            <person name="Kitajima J.P."/>
        </authorList>
    </citation>
    <scope>NUCLEOTIDE SEQUENCE [LARGE SCALE GENOMIC DNA]</scope>
    <source>
        <strain>306</strain>
    </source>
</reference>
<proteinExistence type="inferred from homology"/>
<sequence length="152" mass="17064">MSHHVYELPIDVSQIQTLLPHRYPFLLVDRILELDLETKWIVAQKNVSINEPFFQGHFPNRPVMPGVLIIEALAQVGGVMTQLGLGRDALSQLFYMVKVDKARFNKQVVPGDVLIMEVQMKRLIRNVGCFYGEAKVDGEVVASAEVMCAGAR</sequence>
<dbReference type="EC" id="4.2.1.59" evidence="1"/>
<dbReference type="EMBL" id="AE008923">
    <property type="protein sequence ID" value="AAM36281.1"/>
    <property type="molecule type" value="Genomic_DNA"/>
</dbReference>
<dbReference type="RefSeq" id="WP_003485378.1">
    <property type="nucleotide sequence ID" value="NC_003919.1"/>
</dbReference>
<dbReference type="SMR" id="Q8PML6"/>
<dbReference type="GeneID" id="97509764"/>
<dbReference type="KEGG" id="xac:XAC1410"/>
<dbReference type="eggNOG" id="COG0764">
    <property type="taxonomic scope" value="Bacteria"/>
</dbReference>
<dbReference type="HOGENOM" id="CLU_078912_1_0_6"/>
<dbReference type="Proteomes" id="UP000000576">
    <property type="component" value="Chromosome"/>
</dbReference>
<dbReference type="GO" id="GO:0005737">
    <property type="term" value="C:cytoplasm"/>
    <property type="evidence" value="ECO:0007669"/>
    <property type="project" value="UniProtKB-SubCell"/>
</dbReference>
<dbReference type="GO" id="GO:0016020">
    <property type="term" value="C:membrane"/>
    <property type="evidence" value="ECO:0007669"/>
    <property type="project" value="GOC"/>
</dbReference>
<dbReference type="GO" id="GO:0019171">
    <property type="term" value="F:(3R)-hydroxyacyl-[acyl-carrier-protein] dehydratase activity"/>
    <property type="evidence" value="ECO:0007669"/>
    <property type="project" value="UniProtKB-EC"/>
</dbReference>
<dbReference type="GO" id="GO:0006633">
    <property type="term" value="P:fatty acid biosynthetic process"/>
    <property type="evidence" value="ECO:0007669"/>
    <property type="project" value="UniProtKB-UniRule"/>
</dbReference>
<dbReference type="GO" id="GO:0009245">
    <property type="term" value="P:lipid A biosynthetic process"/>
    <property type="evidence" value="ECO:0007669"/>
    <property type="project" value="UniProtKB-UniRule"/>
</dbReference>
<dbReference type="CDD" id="cd01288">
    <property type="entry name" value="FabZ"/>
    <property type="match status" value="1"/>
</dbReference>
<dbReference type="FunFam" id="3.10.129.10:FF:000001">
    <property type="entry name" value="3-hydroxyacyl-[acyl-carrier-protein] dehydratase FabZ"/>
    <property type="match status" value="1"/>
</dbReference>
<dbReference type="Gene3D" id="3.10.129.10">
    <property type="entry name" value="Hotdog Thioesterase"/>
    <property type="match status" value="1"/>
</dbReference>
<dbReference type="HAMAP" id="MF_00406">
    <property type="entry name" value="FabZ"/>
    <property type="match status" value="1"/>
</dbReference>
<dbReference type="InterPro" id="IPR013114">
    <property type="entry name" value="FabA_FabZ"/>
</dbReference>
<dbReference type="InterPro" id="IPR010084">
    <property type="entry name" value="FabZ"/>
</dbReference>
<dbReference type="InterPro" id="IPR029069">
    <property type="entry name" value="HotDog_dom_sf"/>
</dbReference>
<dbReference type="NCBIfam" id="TIGR01750">
    <property type="entry name" value="fabZ"/>
    <property type="match status" value="1"/>
</dbReference>
<dbReference type="NCBIfam" id="NF000582">
    <property type="entry name" value="PRK00006.1"/>
    <property type="match status" value="1"/>
</dbReference>
<dbReference type="PANTHER" id="PTHR30272">
    <property type="entry name" value="3-HYDROXYACYL-[ACYL-CARRIER-PROTEIN] DEHYDRATASE"/>
    <property type="match status" value="1"/>
</dbReference>
<dbReference type="PANTHER" id="PTHR30272:SF1">
    <property type="entry name" value="3-HYDROXYACYL-[ACYL-CARRIER-PROTEIN] DEHYDRATASE"/>
    <property type="match status" value="1"/>
</dbReference>
<dbReference type="Pfam" id="PF07977">
    <property type="entry name" value="FabA"/>
    <property type="match status" value="1"/>
</dbReference>
<dbReference type="SUPFAM" id="SSF54637">
    <property type="entry name" value="Thioesterase/thiol ester dehydrase-isomerase"/>
    <property type="match status" value="1"/>
</dbReference>
<keyword id="KW-0963">Cytoplasm</keyword>
<keyword id="KW-0441">Lipid A biosynthesis</keyword>
<keyword id="KW-0444">Lipid biosynthesis</keyword>
<keyword id="KW-0443">Lipid metabolism</keyword>
<keyword id="KW-0456">Lyase</keyword>
<organism>
    <name type="scientific">Xanthomonas axonopodis pv. citri (strain 306)</name>
    <dbReference type="NCBI Taxonomy" id="190486"/>
    <lineage>
        <taxon>Bacteria</taxon>
        <taxon>Pseudomonadati</taxon>
        <taxon>Pseudomonadota</taxon>
        <taxon>Gammaproteobacteria</taxon>
        <taxon>Lysobacterales</taxon>
        <taxon>Lysobacteraceae</taxon>
        <taxon>Xanthomonas</taxon>
    </lineage>
</organism>
<protein>
    <recommendedName>
        <fullName evidence="1">3-hydroxyacyl-[acyl-carrier-protein] dehydratase FabZ</fullName>
        <ecNumber evidence="1">4.2.1.59</ecNumber>
    </recommendedName>
    <alternativeName>
        <fullName evidence="1">(3R)-hydroxymyristoyl-[acyl-carrier-protein] dehydratase</fullName>
        <shortName evidence="1">(3R)-hydroxymyristoyl-ACP dehydrase</shortName>
    </alternativeName>
    <alternativeName>
        <fullName evidence="1">Beta-hydroxyacyl-ACP dehydratase</fullName>
    </alternativeName>
</protein>
<evidence type="ECO:0000255" key="1">
    <source>
        <dbReference type="HAMAP-Rule" id="MF_00406"/>
    </source>
</evidence>
<gene>
    <name evidence="1" type="primary">fabZ</name>
    <name type="ordered locus">XAC1410</name>
</gene>
<comment type="function">
    <text evidence="1">Involved in unsaturated fatty acids biosynthesis. Catalyzes the dehydration of short chain beta-hydroxyacyl-ACPs and long chain saturated and unsaturated beta-hydroxyacyl-ACPs.</text>
</comment>
<comment type="catalytic activity">
    <reaction evidence="1">
        <text>a (3R)-hydroxyacyl-[ACP] = a (2E)-enoyl-[ACP] + H2O</text>
        <dbReference type="Rhea" id="RHEA:13097"/>
        <dbReference type="Rhea" id="RHEA-COMP:9925"/>
        <dbReference type="Rhea" id="RHEA-COMP:9945"/>
        <dbReference type="ChEBI" id="CHEBI:15377"/>
        <dbReference type="ChEBI" id="CHEBI:78784"/>
        <dbReference type="ChEBI" id="CHEBI:78827"/>
        <dbReference type="EC" id="4.2.1.59"/>
    </reaction>
</comment>
<comment type="subcellular location">
    <subcellularLocation>
        <location evidence="1">Cytoplasm</location>
    </subcellularLocation>
</comment>
<comment type="similarity">
    <text evidence="1">Belongs to the thioester dehydratase family. FabZ subfamily.</text>
</comment>
<accession>Q8PML6</accession>
<feature type="chain" id="PRO_0000091763" description="3-hydroxyacyl-[acyl-carrier-protein] dehydratase FabZ">
    <location>
        <begin position="1"/>
        <end position="152"/>
    </location>
</feature>
<feature type="active site" evidence="1">
    <location>
        <position position="57"/>
    </location>
</feature>
<name>FABZ_XANAC</name>